<keyword id="KW-0004">4Fe-4S</keyword>
<keyword id="KW-0963">Cytoplasm</keyword>
<keyword id="KW-1015">Disulfide bond</keyword>
<keyword id="KW-0408">Iron</keyword>
<keyword id="KW-0411">Iron-sulfur</keyword>
<keyword id="KW-0479">Metal-binding</keyword>
<keyword id="KW-0489">Methyltransferase</keyword>
<keyword id="KW-0698">rRNA processing</keyword>
<keyword id="KW-0949">S-adenosyl-L-methionine</keyword>
<keyword id="KW-0808">Transferase</keyword>
<keyword id="KW-0819">tRNA processing</keyword>
<gene>
    <name evidence="1" type="primary">rlmN</name>
    <name type="ordered locus">Bcen2424_1814</name>
</gene>
<sequence>MTSETSVNLLDFDAEGLVAYCGSLGEKPFRAKQLQRWIHQYNAGDFDGMTDLAKSLREKLKGRASIVMPDIASDHVSTDGTRKWLIDVGNGNAVETVFIPEETRGTLCVSSQAGCAVNCRFCSTGKQGFSRNLSTAEIIGQLRMAEFALRASLGRAPGPNGKAERVVTNVVMMGMGEPLLNYSAVVPAMRLMLDDNAYGLSRRRVTLSTSGVVPMMDRLGAELPVALAVSLHAPNDALRDELVPLNKKYPLRELMAACQRYLKVAPRDFITFEYCMLDGVNDTEAHARELLAVTRDVPCKFNLIPFNPFPESGLIRSKPEQIKRFAQVLIDAGVVTTVRKTRGDDIDAACGQLAGAVKDRTRLAERTGAAGKIIEVRAV</sequence>
<name>RLMN_BURCH</name>
<proteinExistence type="inferred from homology"/>
<feature type="chain" id="PRO_0000350073" description="Dual-specificity RNA methyltransferase RlmN">
    <location>
        <begin position="1"/>
        <end position="379"/>
    </location>
</feature>
<feature type="domain" description="Radical SAM core" evidence="2">
    <location>
        <begin position="101"/>
        <end position="345"/>
    </location>
</feature>
<feature type="active site" description="Proton acceptor" evidence="1">
    <location>
        <position position="95"/>
    </location>
</feature>
<feature type="active site" description="S-methylcysteine intermediate" evidence="1">
    <location>
        <position position="350"/>
    </location>
</feature>
<feature type="binding site" evidence="1">
    <location>
        <position position="115"/>
    </location>
    <ligand>
        <name>[4Fe-4S] cluster</name>
        <dbReference type="ChEBI" id="CHEBI:49883"/>
        <note>4Fe-4S-S-AdoMet</note>
    </ligand>
</feature>
<feature type="binding site" evidence="1">
    <location>
        <position position="119"/>
    </location>
    <ligand>
        <name>[4Fe-4S] cluster</name>
        <dbReference type="ChEBI" id="CHEBI:49883"/>
        <note>4Fe-4S-S-AdoMet</note>
    </ligand>
</feature>
<feature type="binding site" evidence="1">
    <location>
        <position position="122"/>
    </location>
    <ligand>
        <name>[4Fe-4S] cluster</name>
        <dbReference type="ChEBI" id="CHEBI:49883"/>
        <note>4Fe-4S-S-AdoMet</note>
    </ligand>
</feature>
<feature type="binding site" evidence="1">
    <location>
        <begin position="176"/>
        <end position="177"/>
    </location>
    <ligand>
        <name>S-adenosyl-L-methionine</name>
        <dbReference type="ChEBI" id="CHEBI:59789"/>
    </ligand>
</feature>
<feature type="binding site" evidence="1">
    <location>
        <position position="208"/>
    </location>
    <ligand>
        <name>S-adenosyl-L-methionine</name>
        <dbReference type="ChEBI" id="CHEBI:59789"/>
    </ligand>
</feature>
<feature type="binding site" evidence="1">
    <location>
        <begin position="230"/>
        <end position="232"/>
    </location>
    <ligand>
        <name>S-adenosyl-L-methionine</name>
        <dbReference type="ChEBI" id="CHEBI:59789"/>
    </ligand>
</feature>
<feature type="binding site" evidence="1">
    <location>
        <position position="307"/>
    </location>
    <ligand>
        <name>S-adenosyl-L-methionine</name>
        <dbReference type="ChEBI" id="CHEBI:59789"/>
    </ligand>
</feature>
<feature type="disulfide bond" description="(transient)" evidence="1">
    <location>
        <begin position="108"/>
        <end position="350"/>
    </location>
</feature>
<comment type="function">
    <text evidence="1">Specifically methylates position 2 of adenine 2503 in 23S rRNA and position 2 of adenine 37 in tRNAs. m2A2503 modification seems to play a crucial role in the proofreading step occurring at the peptidyl transferase center and thus would serve to optimize ribosomal fidelity.</text>
</comment>
<comment type="catalytic activity">
    <reaction evidence="1">
        <text>adenosine(2503) in 23S rRNA + 2 reduced [2Fe-2S]-[ferredoxin] + 2 S-adenosyl-L-methionine = 2-methyladenosine(2503) in 23S rRNA + 5'-deoxyadenosine + L-methionine + 2 oxidized [2Fe-2S]-[ferredoxin] + S-adenosyl-L-homocysteine</text>
        <dbReference type="Rhea" id="RHEA:42916"/>
        <dbReference type="Rhea" id="RHEA-COMP:10000"/>
        <dbReference type="Rhea" id="RHEA-COMP:10001"/>
        <dbReference type="Rhea" id="RHEA-COMP:10152"/>
        <dbReference type="Rhea" id="RHEA-COMP:10282"/>
        <dbReference type="ChEBI" id="CHEBI:17319"/>
        <dbReference type="ChEBI" id="CHEBI:33737"/>
        <dbReference type="ChEBI" id="CHEBI:33738"/>
        <dbReference type="ChEBI" id="CHEBI:57844"/>
        <dbReference type="ChEBI" id="CHEBI:57856"/>
        <dbReference type="ChEBI" id="CHEBI:59789"/>
        <dbReference type="ChEBI" id="CHEBI:74411"/>
        <dbReference type="ChEBI" id="CHEBI:74497"/>
        <dbReference type="EC" id="2.1.1.192"/>
    </reaction>
</comment>
<comment type="catalytic activity">
    <reaction evidence="1">
        <text>adenosine(37) in tRNA + 2 reduced [2Fe-2S]-[ferredoxin] + 2 S-adenosyl-L-methionine = 2-methyladenosine(37) in tRNA + 5'-deoxyadenosine + L-methionine + 2 oxidized [2Fe-2S]-[ferredoxin] + S-adenosyl-L-homocysteine</text>
        <dbReference type="Rhea" id="RHEA:43332"/>
        <dbReference type="Rhea" id="RHEA-COMP:10000"/>
        <dbReference type="Rhea" id="RHEA-COMP:10001"/>
        <dbReference type="Rhea" id="RHEA-COMP:10162"/>
        <dbReference type="Rhea" id="RHEA-COMP:10485"/>
        <dbReference type="ChEBI" id="CHEBI:17319"/>
        <dbReference type="ChEBI" id="CHEBI:33737"/>
        <dbReference type="ChEBI" id="CHEBI:33738"/>
        <dbReference type="ChEBI" id="CHEBI:57844"/>
        <dbReference type="ChEBI" id="CHEBI:57856"/>
        <dbReference type="ChEBI" id="CHEBI:59789"/>
        <dbReference type="ChEBI" id="CHEBI:74411"/>
        <dbReference type="ChEBI" id="CHEBI:74497"/>
        <dbReference type="EC" id="2.1.1.192"/>
    </reaction>
</comment>
<comment type="cofactor">
    <cofactor evidence="1">
        <name>[4Fe-4S] cluster</name>
        <dbReference type="ChEBI" id="CHEBI:49883"/>
    </cofactor>
    <text evidence="1">Binds 1 [4Fe-4S] cluster. The cluster is coordinated with 3 cysteines and an exchangeable S-adenosyl-L-methionine.</text>
</comment>
<comment type="subcellular location">
    <subcellularLocation>
        <location evidence="1">Cytoplasm</location>
    </subcellularLocation>
</comment>
<comment type="miscellaneous">
    <text evidence="1">Reaction proceeds by a ping-pong mechanism involving intermediate methylation of a conserved cysteine residue.</text>
</comment>
<comment type="similarity">
    <text evidence="1">Belongs to the radical SAM superfamily. RlmN family.</text>
</comment>
<dbReference type="EC" id="2.1.1.192" evidence="1"/>
<dbReference type="EMBL" id="CP000458">
    <property type="protein sequence ID" value="ABK08565.1"/>
    <property type="molecule type" value="Genomic_DNA"/>
</dbReference>
<dbReference type="RefSeq" id="WP_011549686.1">
    <property type="nucleotide sequence ID" value="NC_008542.1"/>
</dbReference>
<dbReference type="SMR" id="A0K7T8"/>
<dbReference type="GeneID" id="83048611"/>
<dbReference type="KEGG" id="bch:Bcen2424_1814"/>
<dbReference type="HOGENOM" id="CLU_029101_0_0_4"/>
<dbReference type="GO" id="GO:0005737">
    <property type="term" value="C:cytoplasm"/>
    <property type="evidence" value="ECO:0007669"/>
    <property type="project" value="UniProtKB-SubCell"/>
</dbReference>
<dbReference type="GO" id="GO:0051539">
    <property type="term" value="F:4 iron, 4 sulfur cluster binding"/>
    <property type="evidence" value="ECO:0007669"/>
    <property type="project" value="UniProtKB-UniRule"/>
</dbReference>
<dbReference type="GO" id="GO:0046872">
    <property type="term" value="F:metal ion binding"/>
    <property type="evidence" value="ECO:0007669"/>
    <property type="project" value="UniProtKB-KW"/>
</dbReference>
<dbReference type="GO" id="GO:0070040">
    <property type="term" value="F:rRNA (adenine(2503)-C2-)-methyltransferase activity"/>
    <property type="evidence" value="ECO:0007669"/>
    <property type="project" value="UniProtKB-UniRule"/>
</dbReference>
<dbReference type="GO" id="GO:0019843">
    <property type="term" value="F:rRNA binding"/>
    <property type="evidence" value="ECO:0007669"/>
    <property type="project" value="UniProtKB-UniRule"/>
</dbReference>
<dbReference type="GO" id="GO:0002935">
    <property type="term" value="F:tRNA (adenine(37)-C2)-methyltransferase activity"/>
    <property type="evidence" value="ECO:0007669"/>
    <property type="project" value="UniProtKB-UniRule"/>
</dbReference>
<dbReference type="GO" id="GO:0000049">
    <property type="term" value="F:tRNA binding"/>
    <property type="evidence" value="ECO:0007669"/>
    <property type="project" value="UniProtKB-UniRule"/>
</dbReference>
<dbReference type="GO" id="GO:0070475">
    <property type="term" value="P:rRNA base methylation"/>
    <property type="evidence" value="ECO:0007669"/>
    <property type="project" value="UniProtKB-UniRule"/>
</dbReference>
<dbReference type="GO" id="GO:0030488">
    <property type="term" value="P:tRNA methylation"/>
    <property type="evidence" value="ECO:0007669"/>
    <property type="project" value="UniProtKB-UniRule"/>
</dbReference>
<dbReference type="CDD" id="cd01335">
    <property type="entry name" value="Radical_SAM"/>
    <property type="match status" value="1"/>
</dbReference>
<dbReference type="FunFam" id="1.10.150.530:FF:000003">
    <property type="entry name" value="Dual-specificity RNA methyltransferase RlmN"/>
    <property type="match status" value="1"/>
</dbReference>
<dbReference type="FunFam" id="3.20.20.70:FF:000008">
    <property type="entry name" value="Dual-specificity RNA methyltransferase RlmN"/>
    <property type="match status" value="1"/>
</dbReference>
<dbReference type="Gene3D" id="1.10.150.530">
    <property type="match status" value="1"/>
</dbReference>
<dbReference type="Gene3D" id="3.20.20.70">
    <property type="entry name" value="Aldolase class I"/>
    <property type="match status" value="1"/>
</dbReference>
<dbReference type="HAMAP" id="MF_01849">
    <property type="entry name" value="RNA_methyltr_RlmN"/>
    <property type="match status" value="1"/>
</dbReference>
<dbReference type="InterPro" id="IPR013785">
    <property type="entry name" value="Aldolase_TIM"/>
</dbReference>
<dbReference type="InterPro" id="IPR040072">
    <property type="entry name" value="Methyltransferase_A"/>
</dbReference>
<dbReference type="InterPro" id="IPR048641">
    <property type="entry name" value="RlmN_N"/>
</dbReference>
<dbReference type="InterPro" id="IPR027492">
    <property type="entry name" value="RNA_MTrfase_RlmN"/>
</dbReference>
<dbReference type="InterPro" id="IPR004383">
    <property type="entry name" value="rRNA_lsu_MTrfase_RlmN/Cfr"/>
</dbReference>
<dbReference type="InterPro" id="IPR007197">
    <property type="entry name" value="rSAM"/>
</dbReference>
<dbReference type="NCBIfam" id="TIGR00048">
    <property type="entry name" value="rRNA_mod_RlmN"/>
    <property type="match status" value="1"/>
</dbReference>
<dbReference type="PANTHER" id="PTHR30544">
    <property type="entry name" value="23S RRNA METHYLTRANSFERASE"/>
    <property type="match status" value="1"/>
</dbReference>
<dbReference type="PANTHER" id="PTHR30544:SF5">
    <property type="entry name" value="RADICAL SAM CORE DOMAIN-CONTAINING PROTEIN"/>
    <property type="match status" value="1"/>
</dbReference>
<dbReference type="Pfam" id="PF04055">
    <property type="entry name" value="Radical_SAM"/>
    <property type="match status" value="1"/>
</dbReference>
<dbReference type="Pfam" id="PF21016">
    <property type="entry name" value="RlmN_N"/>
    <property type="match status" value="1"/>
</dbReference>
<dbReference type="PIRSF" id="PIRSF006004">
    <property type="entry name" value="CHP00048"/>
    <property type="match status" value="1"/>
</dbReference>
<dbReference type="SFLD" id="SFLDF00275">
    <property type="entry name" value="adenosine_C2_methyltransferase"/>
    <property type="match status" value="1"/>
</dbReference>
<dbReference type="SFLD" id="SFLDS00029">
    <property type="entry name" value="Radical_SAM"/>
    <property type="match status" value="1"/>
</dbReference>
<dbReference type="SUPFAM" id="SSF102114">
    <property type="entry name" value="Radical SAM enzymes"/>
    <property type="match status" value="1"/>
</dbReference>
<dbReference type="PROSITE" id="PS51918">
    <property type="entry name" value="RADICAL_SAM"/>
    <property type="match status" value="1"/>
</dbReference>
<accession>A0K7T8</accession>
<protein>
    <recommendedName>
        <fullName evidence="1">Dual-specificity RNA methyltransferase RlmN</fullName>
        <ecNumber evidence="1">2.1.1.192</ecNumber>
    </recommendedName>
    <alternativeName>
        <fullName evidence="1">23S rRNA (adenine(2503)-C(2))-methyltransferase</fullName>
    </alternativeName>
    <alternativeName>
        <fullName evidence="1">23S rRNA m2A2503 methyltransferase</fullName>
    </alternativeName>
    <alternativeName>
        <fullName evidence="1">Ribosomal RNA large subunit methyltransferase N</fullName>
    </alternativeName>
    <alternativeName>
        <fullName evidence="1">tRNA (adenine(37)-C(2))-methyltransferase</fullName>
    </alternativeName>
    <alternativeName>
        <fullName evidence="1">tRNA m2A37 methyltransferase</fullName>
    </alternativeName>
</protein>
<evidence type="ECO:0000255" key="1">
    <source>
        <dbReference type="HAMAP-Rule" id="MF_01849"/>
    </source>
</evidence>
<evidence type="ECO:0000255" key="2">
    <source>
        <dbReference type="PROSITE-ProRule" id="PRU01266"/>
    </source>
</evidence>
<organism>
    <name type="scientific">Burkholderia cenocepacia (strain HI2424)</name>
    <dbReference type="NCBI Taxonomy" id="331272"/>
    <lineage>
        <taxon>Bacteria</taxon>
        <taxon>Pseudomonadati</taxon>
        <taxon>Pseudomonadota</taxon>
        <taxon>Betaproteobacteria</taxon>
        <taxon>Burkholderiales</taxon>
        <taxon>Burkholderiaceae</taxon>
        <taxon>Burkholderia</taxon>
        <taxon>Burkholderia cepacia complex</taxon>
    </lineage>
</organism>
<reference key="1">
    <citation type="submission" date="2006-08" db="EMBL/GenBank/DDBJ databases">
        <title>Complete sequence of chromosome 1 of Burkholderia cenocepacia HI2424.</title>
        <authorList>
            <person name="Copeland A."/>
            <person name="Lucas S."/>
            <person name="Lapidus A."/>
            <person name="Barry K."/>
            <person name="Detter J.C."/>
            <person name="Glavina del Rio T."/>
            <person name="Hammon N."/>
            <person name="Israni S."/>
            <person name="Pitluck S."/>
            <person name="Chain P."/>
            <person name="Malfatti S."/>
            <person name="Shin M."/>
            <person name="Vergez L."/>
            <person name="Schmutz J."/>
            <person name="Larimer F."/>
            <person name="Land M."/>
            <person name="Hauser L."/>
            <person name="Kyrpides N."/>
            <person name="Kim E."/>
            <person name="LiPuma J.J."/>
            <person name="Gonzalez C.F."/>
            <person name="Konstantinidis K."/>
            <person name="Tiedje J.M."/>
            <person name="Richardson P."/>
        </authorList>
    </citation>
    <scope>NUCLEOTIDE SEQUENCE [LARGE SCALE GENOMIC DNA]</scope>
    <source>
        <strain>HI2424</strain>
    </source>
</reference>